<accession>A3DD54</accession>
<feature type="chain" id="PRO_0000367652" description="Glutamate--tRNA ligase">
    <location>
        <begin position="1"/>
        <end position="546"/>
    </location>
</feature>
<feature type="short sequence motif" description="'HIGH' region" evidence="1">
    <location>
        <begin position="42"/>
        <end position="52"/>
    </location>
</feature>
<feature type="short sequence motif" description="'KMSKS' region" evidence="1">
    <location>
        <begin position="293"/>
        <end position="297"/>
    </location>
</feature>
<feature type="binding site" evidence="1">
    <location>
        <position position="296"/>
    </location>
    <ligand>
        <name>ATP</name>
        <dbReference type="ChEBI" id="CHEBI:30616"/>
    </ligand>
</feature>
<dbReference type="EC" id="6.1.1.17" evidence="1"/>
<dbReference type="EMBL" id="CP000568">
    <property type="protein sequence ID" value="ABN51883.1"/>
    <property type="molecule type" value="Genomic_DNA"/>
</dbReference>
<dbReference type="RefSeq" id="WP_003516596.1">
    <property type="nucleotide sequence ID" value="NC_009012.1"/>
</dbReference>
<dbReference type="SMR" id="A3DD54"/>
<dbReference type="STRING" id="203119.Cthe_0648"/>
<dbReference type="GeneID" id="35803697"/>
<dbReference type="KEGG" id="cth:Cthe_0648"/>
<dbReference type="eggNOG" id="COG0008">
    <property type="taxonomic scope" value="Bacteria"/>
</dbReference>
<dbReference type="HOGENOM" id="CLU_015768_6_3_9"/>
<dbReference type="OrthoDB" id="9807503at2"/>
<dbReference type="Proteomes" id="UP000002145">
    <property type="component" value="Chromosome"/>
</dbReference>
<dbReference type="GO" id="GO:0005829">
    <property type="term" value="C:cytosol"/>
    <property type="evidence" value="ECO:0007669"/>
    <property type="project" value="TreeGrafter"/>
</dbReference>
<dbReference type="GO" id="GO:0005524">
    <property type="term" value="F:ATP binding"/>
    <property type="evidence" value="ECO:0007669"/>
    <property type="project" value="UniProtKB-UniRule"/>
</dbReference>
<dbReference type="GO" id="GO:0004818">
    <property type="term" value="F:glutamate-tRNA ligase activity"/>
    <property type="evidence" value="ECO:0007669"/>
    <property type="project" value="UniProtKB-UniRule"/>
</dbReference>
<dbReference type="GO" id="GO:0000049">
    <property type="term" value="F:tRNA binding"/>
    <property type="evidence" value="ECO:0007669"/>
    <property type="project" value="InterPro"/>
</dbReference>
<dbReference type="GO" id="GO:0006424">
    <property type="term" value="P:glutamyl-tRNA aminoacylation"/>
    <property type="evidence" value="ECO:0007669"/>
    <property type="project" value="UniProtKB-UniRule"/>
</dbReference>
<dbReference type="Gene3D" id="1.10.10.350">
    <property type="match status" value="1"/>
</dbReference>
<dbReference type="Gene3D" id="3.40.50.620">
    <property type="entry name" value="HUPs"/>
    <property type="match status" value="1"/>
</dbReference>
<dbReference type="HAMAP" id="MF_00022">
    <property type="entry name" value="Glu_tRNA_synth_type1"/>
    <property type="match status" value="1"/>
</dbReference>
<dbReference type="InterPro" id="IPR045462">
    <property type="entry name" value="aa-tRNA-synth_I_cd-bd"/>
</dbReference>
<dbReference type="InterPro" id="IPR020751">
    <property type="entry name" value="aa-tRNA-synth_I_codon-bd_sub2"/>
</dbReference>
<dbReference type="InterPro" id="IPR001412">
    <property type="entry name" value="aa-tRNA-synth_I_CS"/>
</dbReference>
<dbReference type="InterPro" id="IPR008925">
    <property type="entry name" value="aa_tRNA-synth_I_cd-bd_sf"/>
</dbReference>
<dbReference type="InterPro" id="IPR004527">
    <property type="entry name" value="Glu-tRNA-ligase_bac/mito"/>
</dbReference>
<dbReference type="InterPro" id="IPR000924">
    <property type="entry name" value="Glu/Gln-tRNA-synth"/>
</dbReference>
<dbReference type="InterPro" id="IPR020058">
    <property type="entry name" value="Glu/Gln-tRNA-synth_Ib_cat-dom"/>
</dbReference>
<dbReference type="InterPro" id="IPR049940">
    <property type="entry name" value="GluQ/Sye"/>
</dbReference>
<dbReference type="InterPro" id="IPR014729">
    <property type="entry name" value="Rossmann-like_a/b/a_fold"/>
</dbReference>
<dbReference type="NCBIfam" id="TIGR00464">
    <property type="entry name" value="gltX_bact"/>
    <property type="match status" value="1"/>
</dbReference>
<dbReference type="PANTHER" id="PTHR43311">
    <property type="entry name" value="GLUTAMATE--TRNA LIGASE"/>
    <property type="match status" value="1"/>
</dbReference>
<dbReference type="PANTHER" id="PTHR43311:SF2">
    <property type="entry name" value="GLUTAMATE--TRNA LIGASE, MITOCHONDRIAL-RELATED"/>
    <property type="match status" value="1"/>
</dbReference>
<dbReference type="Pfam" id="PF19269">
    <property type="entry name" value="Anticodon_2"/>
    <property type="match status" value="1"/>
</dbReference>
<dbReference type="Pfam" id="PF00749">
    <property type="entry name" value="tRNA-synt_1c"/>
    <property type="match status" value="1"/>
</dbReference>
<dbReference type="PRINTS" id="PR00987">
    <property type="entry name" value="TRNASYNTHGLU"/>
</dbReference>
<dbReference type="SUPFAM" id="SSF48163">
    <property type="entry name" value="An anticodon-binding domain of class I aminoacyl-tRNA synthetases"/>
    <property type="match status" value="1"/>
</dbReference>
<dbReference type="SUPFAM" id="SSF52374">
    <property type="entry name" value="Nucleotidylyl transferase"/>
    <property type="match status" value="1"/>
</dbReference>
<dbReference type="PROSITE" id="PS00178">
    <property type="entry name" value="AA_TRNA_LIGASE_I"/>
    <property type="match status" value="1"/>
</dbReference>
<comment type="function">
    <text evidence="1">Catalyzes the attachment of glutamate to tRNA(Glu) in a two-step reaction: glutamate is first activated by ATP to form Glu-AMP and then transferred to the acceptor end of tRNA(Glu).</text>
</comment>
<comment type="catalytic activity">
    <reaction evidence="1">
        <text>tRNA(Glu) + L-glutamate + ATP = L-glutamyl-tRNA(Glu) + AMP + diphosphate</text>
        <dbReference type="Rhea" id="RHEA:23540"/>
        <dbReference type="Rhea" id="RHEA-COMP:9663"/>
        <dbReference type="Rhea" id="RHEA-COMP:9680"/>
        <dbReference type="ChEBI" id="CHEBI:29985"/>
        <dbReference type="ChEBI" id="CHEBI:30616"/>
        <dbReference type="ChEBI" id="CHEBI:33019"/>
        <dbReference type="ChEBI" id="CHEBI:78442"/>
        <dbReference type="ChEBI" id="CHEBI:78520"/>
        <dbReference type="ChEBI" id="CHEBI:456215"/>
        <dbReference type="EC" id="6.1.1.17"/>
    </reaction>
</comment>
<comment type="subunit">
    <text evidence="1">Monomer.</text>
</comment>
<comment type="subcellular location">
    <subcellularLocation>
        <location evidence="1">Cytoplasm</location>
    </subcellularLocation>
</comment>
<comment type="similarity">
    <text evidence="1">Belongs to the class-I aminoacyl-tRNA synthetase family. Glutamate--tRNA ligase type 1 subfamily.</text>
</comment>
<gene>
    <name evidence="1" type="primary">gltX</name>
    <name type="ordered locus">Cthe_0648</name>
</gene>
<evidence type="ECO:0000255" key="1">
    <source>
        <dbReference type="HAMAP-Rule" id="MF_00022"/>
    </source>
</evidence>
<protein>
    <recommendedName>
        <fullName evidence="1">Glutamate--tRNA ligase</fullName>
        <ecNumber evidence="1">6.1.1.17</ecNumber>
    </recommendedName>
    <alternativeName>
        <fullName evidence="1">Glutamyl-tRNA synthetase</fullName>
        <shortName evidence="1">GluRS</shortName>
    </alternativeName>
</protein>
<sequence>MDYKKLADMLFPHITKSVSYYEDVVFPARNLSPGAKVTRLAPSPTGFIHLGNLYGAFVDERLAHQSNGVFILRIEDTDDKRKVEGAVETIISSLEFFNLKFDEGAGINGETGNYGPYFQSNRAEIYQTVAKHLVEMGRAYPCFCSEEELEEIRKQQLAENVNTGYYGKWAVHRNLTLEEVQKHLENNESFVIRFKSMGNPEETFEIDDAIRGRLSMQVNFQDIVLLKANGIPTYHFAHVVDDHLMRVTHVVRGEEWLSTLPIHYELFTTLGWDLPVYCHTAHLMKIDNGVKRKLSKRKDPELGLEYYMQLGYHPAAVREYLMTILNSNFEEWRIQNPDSDINDFPFSLNKMSNSGALFDLDKLNDVSKNVLAKIPAEEIYEFLLKWAKEYKKEIVNLLEEHKDSVIKLLSVGRNSEKPRKDLIYCEQIFEFIKYFFDEYFAIVDKYPDNVDEEEAKKILKAYLETYDHNDDQTQWFEKIKVIATENGYAAKPKDYKKNPDMYKGHVGDVSTVIRIAIVGRSSSPDLWEIQQIMGEEKVRERIQRLL</sequence>
<name>SYE_ACET2</name>
<proteinExistence type="inferred from homology"/>
<organism>
    <name type="scientific">Acetivibrio thermocellus (strain ATCC 27405 / DSM 1237 / JCM 9322 / NBRC 103400 / NCIMB 10682 / NRRL B-4536 / VPI 7372)</name>
    <name type="common">Clostridium thermocellum</name>
    <dbReference type="NCBI Taxonomy" id="203119"/>
    <lineage>
        <taxon>Bacteria</taxon>
        <taxon>Bacillati</taxon>
        <taxon>Bacillota</taxon>
        <taxon>Clostridia</taxon>
        <taxon>Eubacteriales</taxon>
        <taxon>Oscillospiraceae</taxon>
        <taxon>Acetivibrio</taxon>
    </lineage>
</organism>
<reference key="1">
    <citation type="submission" date="2007-02" db="EMBL/GenBank/DDBJ databases">
        <title>Complete sequence of Clostridium thermocellum ATCC 27405.</title>
        <authorList>
            <consortium name="US DOE Joint Genome Institute"/>
            <person name="Copeland A."/>
            <person name="Lucas S."/>
            <person name="Lapidus A."/>
            <person name="Barry K."/>
            <person name="Detter J.C."/>
            <person name="Glavina del Rio T."/>
            <person name="Hammon N."/>
            <person name="Israni S."/>
            <person name="Dalin E."/>
            <person name="Tice H."/>
            <person name="Pitluck S."/>
            <person name="Chertkov O."/>
            <person name="Brettin T."/>
            <person name="Bruce D."/>
            <person name="Han C."/>
            <person name="Tapia R."/>
            <person name="Gilna P."/>
            <person name="Schmutz J."/>
            <person name="Larimer F."/>
            <person name="Land M."/>
            <person name="Hauser L."/>
            <person name="Kyrpides N."/>
            <person name="Mikhailova N."/>
            <person name="Wu J.H.D."/>
            <person name="Newcomb M."/>
            <person name="Richardson P."/>
        </authorList>
    </citation>
    <scope>NUCLEOTIDE SEQUENCE [LARGE SCALE GENOMIC DNA]</scope>
    <source>
        <strain>ATCC 27405 / DSM 1237 / JCM 9322 / NBRC 103400 / NCIMB 10682 / NRRL B-4536 / VPI 7372</strain>
    </source>
</reference>
<keyword id="KW-0030">Aminoacyl-tRNA synthetase</keyword>
<keyword id="KW-0067">ATP-binding</keyword>
<keyword id="KW-0963">Cytoplasm</keyword>
<keyword id="KW-0436">Ligase</keyword>
<keyword id="KW-0547">Nucleotide-binding</keyword>
<keyword id="KW-0648">Protein biosynthesis</keyword>
<keyword id="KW-1185">Reference proteome</keyword>